<reference key="1">
    <citation type="journal article" date="2004" name="Genome Res.">
        <title>The status, quality, and expansion of the NIH full-length cDNA project: the Mammalian Gene Collection (MGC).</title>
        <authorList>
            <consortium name="The MGC Project Team"/>
        </authorList>
    </citation>
    <scope>NUCLEOTIDE SEQUENCE [LARGE SCALE MRNA]</scope>
    <source>
        <tissue>Brain</tissue>
    </source>
</reference>
<feature type="initiator methionine" description="Removed" evidence="1">
    <location>
        <position position="1"/>
    </location>
</feature>
<feature type="chain" id="PRO_0000227730" description="Histone acetyltransferase type B catalytic subunit">
    <location>
        <begin position="2"/>
        <end position="419"/>
    </location>
</feature>
<feature type="region of interest" description="Interaction with histone H4 N-terminus" evidence="1">
    <location>
        <begin position="62"/>
        <end position="64"/>
    </location>
</feature>
<feature type="region of interest" description="Interaction with histone H4 N-terminus" evidence="1">
    <location>
        <begin position="225"/>
        <end position="227"/>
    </location>
</feature>
<feature type="active site" description="Proton donor/acceptor" evidence="1">
    <location>
        <position position="276"/>
    </location>
</feature>
<feature type="binding site" evidence="1">
    <location>
        <begin position="241"/>
        <end position="243"/>
    </location>
    <ligand>
        <name>acetyl-CoA</name>
        <dbReference type="ChEBI" id="CHEBI:57288"/>
    </ligand>
</feature>
<feature type="binding site" evidence="1">
    <location>
        <begin position="248"/>
        <end position="254"/>
    </location>
    <ligand>
        <name>acetyl-CoA</name>
        <dbReference type="ChEBI" id="CHEBI:57288"/>
    </ligand>
</feature>
<feature type="site" description="Interaction with histone H4 N-terminus" evidence="1">
    <location>
        <position position="199"/>
    </location>
</feature>
<feature type="modified residue" description="N-acetylalanine" evidence="1">
    <location>
        <position position="2"/>
    </location>
</feature>
<feature type="modified residue" description="N6-acetyllysine" evidence="2">
    <location>
        <position position="9"/>
    </location>
</feature>
<feature type="modified residue" description="N6-acetyllysine" evidence="2">
    <location>
        <position position="15"/>
    </location>
</feature>
<feature type="modified residue" description="Phosphoserine" evidence="1">
    <location>
        <position position="190"/>
    </location>
</feature>
<feature type="modified residue" description="Phosphoserine" evidence="1">
    <location>
        <position position="343"/>
    </location>
</feature>
<proteinExistence type="evidence at transcript level"/>
<gene>
    <name type="primary">Hat1</name>
</gene>
<comment type="function">
    <text evidence="1">Histone acetyltransferase that plays a role in different biological processes including cell cycle progression, glucose metabolism, histone production or DNA damage repair. Coordinates histone production and acetylation via H4 promoter binding. Acetylates histone H4 at 'Lys-5' (H4K5ac) and 'Lys-12' (H4K12ac) and, to a lesser extent, histone H2A at 'Lys-5' (H2AK5ac). Drives H4 production by chromatin binding to support chromatin replication and acetylation. Since transcription of H4 genes is tightly coupled to S-phase, plays an important role in S-phase entry and progression. Promotes homologous recombination in DNA repair by facilitating histone turnover and incorporation of acetylated H3.3 at sites of double-strand breaks. In addition, acetylates other substrates such as chromatin-related proteins. Also acetylates RSAD2 which mediates the interaction of ubiquitin ligase UBE4A with RSAD2 leading to RSAD2 ubiquitination and subsequent degradation.</text>
</comment>
<comment type="catalytic activity">
    <reaction evidence="1">
        <text>L-lysyl-[protein] + acetyl-CoA = N(6)-acetyl-L-lysyl-[protein] + CoA + H(+)</text>
        <dbReference type="Rhea" id="RHEA:45948"/>
        <dbReference type="Rhea" id="RHEA-COMP:9752"/>
        <dbReference type="Rhea" id="RHEA-COMP:10731"/>
        <dbReference type="ChEBI" id="CHEBI:15378"/>
        <dbReference type="ChEBI" id="CHEBI:29969"/>
        <dbReference type="ChEBI" id="CHEBI:57287"/>
        <dbReference type="ChEBI" id="CHEBI:57288"/>
        <dbReference type="ChEBI" id="CHEBI:61930"/>
        <dbReference type="EC" id="2.3.1.48"/>
    </reaction>
</comment>
<comment type="subunit">
    <text evidence="1">Catalytic subunit of the type B histone acetyltransferase (HAT) complex, composed of RBBP7 and HAT1. Interacts with histones H4 and H2A. The interaction is dependent of the ability of RBBP7 to bind to the N-terminus of histones. Component of the histone H3.1 and H3.3 complexes.</text>
</comment>
<comment type="subcellular location">
    <subcellularLocation>
        <location evidence="1">Nucleus matrix</location>
    </subcellularLocation>
    <subcellularLocation>
        <location evidence="1">Mitochondrion</location>
    </subcellularLocation>
</comment>
<comment type="PTM">
    <text evidence="1">Phosphorylated by AMPK at Ser-190; phosphorylation increases HAT1 activity.</text>
</comment>
<comment type="similarity">
    <text evidence="3">Belongs to the HAT1 family.</text>
</comment>
<name>HAT1_RAT</name>
<keyword id="KW-0007">Acetylation</keyword>
<keyword id="KW-0012">Acyltransferase</keyword>
<keyword id="KW-0496">Mitochondrion</keyword>
<keyword id="KW-0539">Nucleus</keyword>
<keyword id="KW-0597">Phosphoprotein</keyword>
<keyword id="KW-1185">Reference proteome</keyword>
<keyword id="KW-0808">Transferase</keyword>
<accession>Q5M939</accession>
<protein>
    <recommendedName>
        <fullName>Histone acetyltransferase type B catalytic subunit</fullName>
        <ecNumber evidence="1">2.3.1.48</ecNumber>
    </recommendedName>
    <alternativeName>
        <fullName>Histone acetyltransferase 1</fullName>
    </alternativeName>
</protein>
<evidence type="ECO:0000250" key="1">
    <source>
        <dbReference type="UniProtKB" id="O14929"/>
    </source>
</evidence>
<evidence type="ECO:0000250" key="2">
    <source>
        <dbReference type="UniProtKB" id="Q8BY71"/>
    </source>
</evidence>
<evidence type="ECO:0000305" key="3"/>
<sequence>MAGFGAMEKFLVEYKSAVEKKLAEYKCNTNTAIELKLVRFPEDLENDIRTFFPEYTHQLFGDDETAFGYKGLKILLYYIAGSLSTMFRVEYASKVDENFDCVEADDVEGKIRQIIPPGFCTNTNDFLSLLEKEADFKPFGTLLHTYSVPSPTGGENFTFQIYKADMTCRGFREYHERLQTFLMWFIETASFIDVDDERWHYFLVFEKYNKDGATLFATVGYMTVYNYYVYPDKTRPRVSQMLILTPFQGQGHGAQLLETVHRYYIASSSVLDITAEDPSKSYVKLRDFVLVKLCQDLPCFSRERLLQGFNEDMAIQAQQKFKINKQHARRVYEILRLLVTDMSDAEQCRSYRLDIKRRLISPYKKKQTDLAKMRKCLRPEELTNQMNQIEISVQHEQLEEQFQELVEDYRRVIERLAQE</sequence>
<organism>
    <name type="scientific">Rattus norvegicus</name>
    <name type="common">Rat</name>
    <dbReference type="NCBI Taxonomy" id="10116"/>
    <lineage>
        <taxon>Eukaryota</taxon>
        <taxon>Metazoa</taxon>
        <taxon>Chordata</taxon>
        <taxon>Craniata</taxon>
        <taxon>Vertebrata</taxon>
        <taxon>Euteleostomi</taxon>
        <taxon>Mammalia</taxon>
        <taxon>Eutheria</taxon>
        <taxon>Euarchontoglires</taxon>
        <taxon>Glires</taxon>
        <taxon>Rodentia</taxon>
        <taxon>Myomorpha</taxon>
        <taxon>Muroidea</taxon>
        <taxon>Muridae</taxon>
        <taxon>Murinae</taxon>
        <taxon>Rattus</taxon>
    </lineage>
</organism>
<dbReference type="EC" id="2.3.1.48" evidence="1"/>
<dbReference type="EMBL" id="BC087663">
    <property type="protein sequence ID" value="AAH87663.1"/>
    <property type="molecule type" value="mRNA"/>
</dbReference>
<dbReference type="RefSeq" id="NP_001009657.1">
    <property type="nucleotide sequence ID" value="NM_001009657.1"/>
</dbReference>
<dbReference type="SMR" id="Q5M939"/>
<dbReference type="FunCoup" id="Q5M939">
    <property type="interactions" value="3640"/>
</dbReference>
<dbReference type="STRING" id="10116.ENSRNOP00000002085"/>
<dbReference type="GlyGen" id="Q5M939">
    <property type="glycosylation" value="1 site"/>
</dbReference>
<dbReference type="iPTMnet" id="Q5M939"/>
<dbReference type="PhosphoSitePlus" id="Q5M939"/>
<dbReference type="jPOST" id="Q5M939"/>
<dbReference type="PaxDb" id="10116-ENSRNOP00000002085"/>
<dbReference type="Ensembl" id="ENSRNOT00000002085.7">
    <property type="protein sequence ID" value="ENSRNOP00000002085.5"/>
    <property type="gene ID" value="ENSRNOG00000001524.8"/>
</dbReference>
<dbReference type="GeneID" id="296501"/>
<dbReference type="KEGG" id="rno:296501"/>
<dbReference type="UCSC" id="RGD:1305716">
    <property type="organism name" value="rat"/>
</dbReference>
<dbReference type="AGR" id="RGD:1305716"/>
<dbReference type="CTD" id="8520"/>
<dbReference type="RGD" id="1305716">
    <property type="gene designation" value="Hat1"/>
</dbReference>
<dbReference type="eggNOG" id="KOG2696">
    <property type="taxonomic scope" value="Eukaryota"/>
</dbReference>
<dbReference type="GeneTree" id="ENSGT00390000007069"/>
<dbReference type="HOGENOM" id="CLU_036024_0_0_1"/>
<dbReference type="InParanoid" id="Q5M939"/>
<dbReference type="OrthoDB" id="10253098at2759"/>
<dbReference type="Reactome" id="R-RNO-3214847">
    <property type="pathway name" value="HATs acetylate histones"/>
</dbReference>
<dbReference type="PRO" id="PR:Q5M939"/>
<dbReference type="Proteomes" id="UP000002494">
    <property type="component" value="Chromosome 3"/>
</dbReference>
<dbReference type="Bgee" id="ENSRNOG00000001524">
    <property type="expression patterns" value="Expressed in thymus and 19 other cell types or tissues"/>
</dbReference>
<dbReference type="GO" id="GO:0000785">
    <property type="term" value="C:chromatin"/>
    <property type="evidence" value="ECO:0000266"/>
    <property type="project" value="RGD"/>
</dbReference>
<dbReference type="GO" id="GO:0000781">
    <property type="term" value="C:chromosome, telomeric region"/>
    <property type="evidence" value="ECO:0007669"/>
    <property type="project" value="GOC"/>
</dbReference>
<dbReference type="GO" id="GO:0005739">
    <property type="term" value="C:mitochondrion"/>
    <property type="evidence" value="ECO:0007669"/>
    <property type="project" value="UniProtKB-SubCell"/>
</dbReference>
<dbReference type="GO" id="GO:0016363">
    <property type="term" value="C:nuclear matrix"/>
    <property type="evidence" value="ECO:0007669"/>
    <property type="project" value="UniProtKB-SubCell"/>
</dbReference>
<dbReference type="GO" id="GO:0032991">
    <property type="term" value="C:protein-containing complex"/>
    <property type="evidence" value="ECO:0000266"/>
    <property type="project" value="RGD"/>
</dbReference>
<dbReference type="GO" id="GO:0042393">
    <property type="term" value="F:histone binding"/>
    <property type="evidence" value="ECO:0007669"/>
    <property type="project" value="InterPro"/>
</dbReference>
<dbReference type="GO" id="GO:0010485">
    <property type="term" value="F:histone H4 acetyltransferase activity"/>
    <property type="evidence" value="ECO:0000318"/>
    <property type="project" value="GO_Central"/>
</dbReference>
<dbReference type="GO" id="GO:0043997">
    <property type="term" value="F:histone H4K12 acetyltransferase activity"/>
    <property type="evidence" value="ECO:0000250"/>
    <property type="project" value="UniProtKB"/>
</dbReference>
<dbReference type="GO" id="GO:0006334">
    <property type="term" value="P:nucleosome assembly"/>
    <property type="evidence" value="ECO:0000266"/>
    <property type="project" value="RGD"/>
</dbReference>
<dbReference type="GO" id="GO:0007584">
    <property type="term" value="P:response to nutrient"/>
    <property type="evidence" value="ECO:0000270"/>
    <property type="project" value="RGD"/>
</dbReference>
<dbReference type="GO" id="GO:0031509">
    <property type="term" value="P:subtelomeric heterochromatin formation"/>
    <property type="evidence" value="ECO:0007669"/>
    <property type="project" value="InterPro"/>
</dbReference>
<dbReference type="FunFam" id="1.10.10.390:FF:000001">
    <property type="entry name" value="Histone acetyltransferase type B catalytic subunit"/>
    <property type="match status" value="1"/>
</dbReference>
<dbReference type="FunFam" id="3.90.360.10:FF:000001">
    <property type="entry name" value="Histone acetyltransferase type B catalytic subunit"/>
    <property type="match status" value="1"/>
</dbReference>
<dbReference type="Gene3D" id="1.10.10.390">
    <property type="match status" value="1"/>
</dbReference>
<dbReference type="Gene3D" id="3.40.630.30">
    <property type="match status" value="1"/>
</dbReference>
<dbReference type="Gene3D" id="3.90.360.10">
    <property type="entry name" value="Histone acetyl transferase 1 (HAT1), N-terminal domain"/>
    <property type="match status" value="1"/>
</dbReference>
<dbReference type="InterPro" id="IPR016181">
    <property type="entry name" value="Acyl_CoA_acyltransferase"/>
</dbReference>
<dbReference type="InterPro" id="IPR048776">
    <property type="entry name" value="HAT1_C"/>
</dbReference>
<dbReference type="InterPro" id="IPR019467">
    <property type="entry name" value="Hat1_N"/>
</dbReference>
<dbReference type="InterPro" id="IPR037113">
    <property type="entry name" value="Hat1_N_sf"/>
</dbReference>
<dbReference type="InterPro" id="IPR017380">
    <property type="entry name" value="Hist_AcTrfase_B-typ_cat-su"/>
</dbReference>
<dbReference type="InterPro" id="IPR013523">
    <property type="entry name" value="Hist_AcTrfase_HAT1_C"/>
</dbReference>
<dbReference type="PANTHER" id="PTHR12046">
    <property type="entry name" value="HISTONE ACETYLTRANSFERASE TYPE B CATALYTIC SUBUNIT"/>
    <property type="match status" value="1"/>
</dbReference>
<dbReference type="Pfam" id="PF21183">
    <property type="entry name" value="HAT1_C"/>
    <property type="match status" value="1"/>
</dbReference>
<dbReference type="Pfam" id="PF10394">
    <property type="entry name" value="Hat1_N"/>
    <property type="match status" value="1"/>
</dbReference>
<dbReference type="PIRSF" id="PIRSF038084">
    <property type="entry name" value="HAT-B_cat"/>
    <property type="match status" value="1"/>
</dbReference>
<dbReference type="SUPFAM" id="SSF55729">
    <property type="entry name" value="Acyl-CoA N-acyltransferases (Nat)"/>
    <property type="match status" value="1"/>
</dbReference>